<reference key="1">
    <citation type="journal article" date="2008" name="ISME J.">
        <title>Comparative genomics of two ecotypes of the marine planktonic copiotroph Alteromonas macleodii suggests alternative lifestyles associated with different kinds of particulate organic matter.</title>
        <authorList>
            <person name="Ivars-Martinez E."/>
            <person name="Martin-Cuadrado A.-B."/>
            <person name="D'Auria G."/>
            <person name="Mira A."/>
            <person name="Ferriera S."/>
            <person name="Johnson J."/>
            <person name="Friedman R."/>
            <person name="Rodriguez-Valera F."/>
        </authorList>
    </citation>
    <scope>NUCLEOTIDE SEQUENCE [LARGE SCALE GENOMIC DNA]</scope>
    <source>
        <strain>DSM 17117 / CIP 110805 / LMG 28347 / Deep ecotype</strain>
    </source>
</reference>
<proteinExistence type="inferred from homology"/>
<feature type="chain" id="PRO_1000093022" description="S-adenosylmethionine synthase">
    <location>
        <begin position="1"/>
        <end position="381"/>
    </location>
</feature>
<feature type="region of interest" description="Flexible loop" evidence="1">
    <location>
        <begin position="99"/>
        <end position="109"/>
    </location>
</feature>
<feature type="binding site" description="in other chain" evidence="1">
    <location>
        <position position="15"/>
    </location>
    <ligand>
        <name>ATP</name>
        <dbReference type="ChEBI" id="CHEBI:30616"/>
        <note>ligand shared between two neighboring subunits</note>
    </ligand>
</feature>
<feature type="binding site" evidence="1">
    <location>
        <position position="17"/>
    </location>
    <ligand>
        <name>Mg(2+)</name>
        <dbReference type="ChEBI" id="CHEBI:18420"/>
    </ligand>
</feature>
<feature type="binding site" evidence="1">
    <location>
        <position position="43"/>
    </location>
    <ligand>
        <name>K(+)</name>
        <dbReference type="ChEBI" id="CHEBI:29103"/>
    </ligand>
</feature>
<feature type="binding site" description="in other chain" evidence="1">
    <location>
        <position position="56"/>
    </location>
    <ligand>
        <name>L-methionine</name>
        <dbReference type="ChEBI" id="CHEBI:57844"/>
        <note>ligand shared between two neighboring subunits</note>
    </ligand>
</feature>
<feature type="binding site" description="in other chain" evidence="1">
    <location>
        <position position="99"/>
    </location>
    <ligand>
        <name>L-methionine</name>
        <dbReference type="ChEBI" id="CHEBI:57844"/>
        <note>ligand shared between two neighboring subunits</note>
    </ligand>
</feature>
<feature type="binding site" description="in other chain" evidence="1">
    <location>
        <begin position="164"/>
        <end position="166"/>
    </location>
    <ligand>
        <name>ATP</name>
        <dbReference type="ChEBI" id="CHEBI:30616"/>
        <note>ligand shared between two neighboring subunits</note>
    </ligand>
</feature>
<feature type="binding site" description="in other chain" evidence="1">
    <location>
        <begin position="230"/>
        <end position="231"/>
    </location>
    <ligand>
        <name>ATP</name>
        <dbReference type="ChEBI" id="CHEBI:30616"/>
        <note>ligand shared between two neighboring subunits</note>
    </ligand>
</feature>
<feature type="binding site" evidence="1">
    <location>
        <position position="239"/>
    </location>
    <ligand>
        <name>ATP</name>
        <dbReference type="ChEBI" id="CHEBI:30616"/>
        <note>ligand shared between two neighboring subunits</note>
    </ligand>
</feature>
<feature type="binding site" evidence="1">
    <location>
        <position position="239"/>
    </location>
    <ligand>
        <name>L-methionine</name>
        <dbReference type="ChEBI" id="CHEBI:57844"/>
        <note>ligand shared between two neighboring subunits</note>
    </ligand>
</feature>
<feature type="binding site" description="in other chain" evidence="1">
    <location>
        <begin position="245"/>
        <end position="246"/>
    </location>
    <ligand>
        <name>ATP</name>
        <dbReference type="ChEBI" id="CHEBI:30616"/>
        <note>ligand shared between two neighboring subunits</note>
    </ligand>
</feature>
<feature type="binding site" evidence="1">
    <location>
        <position position="262"/>
    </location>
    <ligand>
        <name>ATP</name>
        <dbReference type="ChEBI" id="CHEBI:30616"/>
        <note>ligand shared between two neighboring subunits</note>
    </ligand>
</feature>
<feature type="binding site" evidence="1">
    <location>
        <position position="266"/>
    </location>
    <ligand>
        <name>ATP</name>
        <dbReference type="ChEBI" id="CHEBI:30616"/>
        <note>ligand shared between two neighboring subunits</note>
    </ligand>
</feature>
<feature type="binding site" description="in other chain" evidence="1">
    <location>
        <position position="270"/>
    </location>
    <ligand>
        <name>L-methionine</name>
        <dbReference type="ChEBI" id="CHEBI:57844"/>
        <note>ligand shared between two neighboring subunits</note>
    </ligand>
</feature>
<gene>
    <name evidence="1" type="primary">metK</name>
    <name type="ordered locus">MADE_1004340</name>
</gene>
<dbReference type="EC" id="2.5.1.6" evidence="1"/>
<dbReference type="EMBL" id="CP001103">
    <property type="protein sequence ID" value="AEA97016.1"/>
    <property type="molecule type" value="Genomic_DNA"/>
</dbReference>
<dbReference type="RefSeq" id="WP_012517370.1">
    <property type="nucleotide sequence ID" value="NC_011138.3"/>
</dbReference>
<dbReference type="SMR" id="B4RWC7"/>
<dbReference type="GeneID" id="56341339"/>
<dbReference type="KEGG" id="amc:MADE_1004340"/>
<dbReference type="HOGENOM" id="CLU_041802_1_1_6"/>
<dbReference type="UniPathway" id="UPA00315">
    <property type="reaction ID" value="UER00080"/>
</dbReference>
<dbReference type="Proteomes" id="UP000001870">
    <property type="component" value="Chromosome"/>
</dbReference>
<dbReference type="GO" id="GO:0005737">
    <property type="term" value="C:cytoplasm"/>
    <property type="evidence" value="ECO:0007669"/>
    <property type="project" value="UniProtKB-SubCell"/>
</dbReference>
<dbReference type="GO" id="GO:0005524">
    <property type="term" value="F:ATP binding"/>
    <property type="evidence" value="ECO:0007669"/>
    <property type="project" value="UniProtKB-UniRule"/>
</dbReference>
<dbReference type="GO" id="GO:0000287">
    <property type="term" value="F:magnesium ion binding"/>
    <property type="evidence" value="ECO:0007669"/>
    <property type="project" value="UniProtKB-UniRule"/>
</dbReference>
<dbReference type="GO" id="GO:0004478">
    <property type="term" value="F:methionine adenosyltransferase activity"/>
    <property type="evidence" value="ECO:0007669"/>
    <property type="project" value="UniProtKB-UniRule"/>
</dbReference>
<dbReference type="GO" id="GO:0006730">
    <property type="term" value="P:one-carbon metabolic process"/>
    <property type="evidence" value="ECO:0007669"/>
    <property type="project" value="UniProtKB-KW"/>
</dbReference>
<dbReference type="GO" id="GO:0006556">
    <property type="term" value="P:S-adenosylmethionine biosynthetic process"/>
    <property type="evidence" value="ECO:0007669"/>
    <property type="project" value="UniProtKB-UniRule"/>
</dbReference>
<dbReference type="CDD" id="cd18079">
    <property type="entry name" value="S-AdoMet_synt"/>
    <property type="match status" value="1"/>
</dbReference>
<dbReference type="FunFam" id="3.30.300.10:FF:000001">
    <property type="entry name" value="S-adenosylmethionine synthase"/>
    <property type="match status" value="1"/>
</dbReference>
<dbReference type="FunFam" id="3.30.300.10:FF:000003">
    <property type="entry name" value="S-adenosylmethionine synthase"/>
    <property type="match status" value="1"/>
</dbReference>
<dbReference type="FunFam" id="3.30.300.10:FF:000004">
    <property type="entry name" value="S-adenosylmethionine synthase"/>
    <property type="match status" value="1"/>
</dbReference>
<dbReference type="Gene3D" id="3.30.300.10">
    <property type="match status" value="3"/>
</dbReference>
<dbReference type="HAMAP" id="MF_00086">
    <property type="entry name" value="S_AdoMet_synth1"/>
    <property type="match status" value="1"/>
</dbReference>
<dbReference type="InterPro" id="IPR022631">
    <property type="entry name" value="ADOMET_SYNTHASE_CS"/>
</dbReference>
<dbReference type="InterPro" id="IPR022630">
    <property type="entry name" value="S-AdoMet_synt_C"/>
</dbReference>
<dbReference type="InterPro" id="IPR022629">
    <property type="entry name" value="S-AdoMet_synt_central"/>
</dbReference>
<dbReference type="InterPro" id="IPR022628">
    <property type="entry name" value="S-AdoMet_synt_N"/>
</dbReference>
<dbReference type="InterPro" id="IPR002133">
    <property type="entry name" value="S-AdoMet_synthetase"/>
</dbReference>
<dbReference type="InterPro" id="IPR022636">
    <property type="entry name" value="S-AdoMet_synthetase_sfam"/>
</dbReference>
<dbReference type="NCBIfam" id="TIGR01034">
    <property type="entry name" value="metK"/>
    <property type="match status" value="1"/>
</dbReference>
<dbReference type="PANTHER" id="PTHR11964">
    <property type="entry name" value="S-ADENOSYLMETHIONINE SYNTHETASE"/>
    <property type="match status" value="1"/>
</dbReference>
<dbReference type="Pfam" id="PF02773">
    <property type="entry name" value="S-AdoMet_synt_C"/>
    <property type="match status" value="1"/>
</dbReference>
<dbReference type="Pfam" id="PF02772">
    <property type="entry name" value="S-AdoMet_synt_M"/>
    <property type="match status" value="1"/>
</dbReference>
<dbReference type="Pfam" id="PF00438">
    <property type="entry name" value="S-AdoMet_synt_N"/>
    <property type="match status" value="1"/>
</dbReference>
<dbReference type="PIRSF" id="PIRSF000497">
    <property type="entry name" value="MAT"/>
    <property type="match status" value="1"/>
</dbReference>
<dbReference type="SUPFAM" id="SSF55973">
    <property type="entry name" value="S-adenosylmethionine synthetase"/>
    <property type="match status" value="3"/>
</dbReference>
<dbReference type="PROSITE" id="PS00376">
    <property type="entry name" value="ADOMET_SYNTHASE_1"/>
    <property type="match status" value="1"/>
</dbReference>
<dbReference type="PROSITE" id="PS00377">
    <property type="entry name" value="ADOMET_SYNTHASE_2"/>
    <property type="match status" value="1"/>
</dbReference>
<keyword id="KW-0067">ATP-binding</keyword>
<keyword id="KW-0963">Cytoplasm</keyword>
<keyword id="KW-0460">Magnesium</keyword>
<keyword id="KW-0479">Metal-binding</keyword>
<keyword id="KW-0547">Nucleotide-binding</keyword>
<keyword id="KW-0554">One-carbon metabolism</keyword>
<keyword id="KW-0630">Potassium</keyword>
<keyword id="KW-0808">Transferase</keyword>
<evidence type="ECO:0000255" key="1">
    <source>
        <dbReference type="HAMAP-Rule" id="MF_00086"/>
    </source>
</evidence>
<protein>
    <recommendedName>
        <fullName evidence="1">S-adenosylmethionine synthase</fullName>
        <shortName evidence="1">AdoMet synthase</shortName>
        <ecNumber evidence="1">2.5.1.6</ecNumber>
    </recommendedName>
    <alternativeName>
        <fullName evidence="1">MAT</fullName>
    </alternativeName>
    <alternativeName>
        <fullName evidence="1">Methionine adenosyltransferase</fullName>
    </alternativeName>
</protein>
<sequence>MATHLFTSESVSEGHPDKIADQISDAVLDAILEQDPRARVACETYVKTGMVLVGGEVTTSAWVDIEELTRNTVKEIGYTHSDMGFDADSCAVLNAIGKQSPDINQGVDRASLEEQGAGDQGLMFGYASDETDVLMPAPITYSHRLVQKQAEVRKSGKLDWLRPDAKSQITFKYENDKPVGIDAVVLSTQHCDSVSTETVREAVMEEIIKPVLPSEWIDGNTRFHINPTGRFVIGGPMGDCGLTGRKIIVDTYGGMARHGGGAFSGKDPSKVDRSAAYAGRYVAKNIVAAGLAKRCEIQVSYAIGVAEPTSISIDTFGTGVVDEKTLVALVREHFDLRPYGLIQMLDLERPIYRPTAAYGHFGRDEFPWEATDKAQALKASL</sequence>
<comment type="function">
    <text evidence="1">Catalyzes the formation of S-adenosylmethionine (AdoMet) from methionine and ATP. The overall synthetic reaction is composed of two sequential steps, AdoMet formation and the subsequent tripolyphosphate hydrolysis which occurs prior to release of AdoMet from the enzyme.</text>
</comment>
<comment type="catalytic activity">
    <reaction evidence="1">
        <text>L-methionine + ATP + H2O = S-adenosyl-L-methionine + phosphate + diphosphate</text>
        <dbReference type="Rhea" id="RHEA:21080"/>
        <dbReference type="ChEBI" id="CHEBI:15377"/>
        <dbReference type="ChEBI" id="CHEBI:30616"/>
        <dbReference type="ChEBI" id="CHEBI:33019"/>
        <dbReference type="ChEBI" id="CHEBI:43474"/>
        <dbReference type="ChEBI" id="CHEBI:57844"/>
        <dbReference type="ChEBI" id="CHEBI:59789"/>
        <dbReference type="EC" id="2.5.1.6"/>
    </reaction>
</comment>
<comment type="cofactor">
    <cofactor evidence="1">
        <name>Mg(2+)</name>
        <dbReference type="ChEBI" id="CHEBI:18420"/>
    </cofactor>
    <text evidence="1">Binds 2 divalent ions per subunit.</text>
</comment>
<comment type="cofactor">
    <cofactor evidence="1">
        <name>K(+)</name>
        <dbReference type="ChEBI" id="CHEBI:29103"/>
    </cofactor>
    <text evidence="1">Binds 1 potassium ion per subunit.</text>
</comment>
<comment type="pathway">
    <text evidence="1">Amino-acid biosynthesis; S-adenosyl-L-methionine biosynthesis; S-adenosyl-L-methionine from L-methionine: step 1/1.</text>
</comment>
<comment type="subunit">
    <text evidence="1">Homotetramer; dimer of dimers.</text>
</comment>
<comment type="subcellular location">
    <subcellularLocation>
        <location evidence="1">Cytoplasm</location>
    </subcellularLocation>
</comment>
<comment type="similarity">
    <text evidence="1">Belongs to the AdoMet synthase family.</text>
</comment>
<organism>
    <name type="scientific">Alteromonas mediterranea (strain DSM 17117 / CIP 110805 / LMG 28347 / Deep ecotype)</name>
    <dbReference type="NCBI Taxonomy" id="1774373"/>
    <lineage>
        <taxon>Bacteria</taxon>
        <taxon>Pseudomonadati</taxon>
        <taxon>Pseudomonadota</taxon>
        <taxon>Gammaproteobacteria</taxon>
        <taxon>Alteromonadales</taxon>
        <taxon>Alteromonadaceae</taxon>
        <taxon>Alteromonas/Salinimonas group</taxon>
        <taxon>Alteromonas</taxon>
    </lineage>
</organism>
<name>METK_ALTMD</name>
<accession>B4RWC7</accession>
<accession>F2GAX5</accession>